<organism>
    <name type="scientific">Nitrosomonas europaea (strain ATCC 19718 / CIP 103999 / KCTC 2705 / NBRC 14298)</name>
    <dbReference type="NCBI Taxonomy" id="228410"/>
    <lineage>
        <taxon>Bacteria</taxon>
        <taxon>Pseudomonadati</taxon>
        <taxon>Pseudomonadota</taxon>
        <taxon>Betaproteobacteria</taxon>
        <taxon>Nitrosomonadales</taxon>
        <taxon>Nitrosomonadaceae</taxon>
        <taxon>Nitrosomonas</taxon>
    </lineage>
</organism>
<proteinExistence type="inferred from homology"/>
<sequence>MPTISQLVRKPRKAKRTKSKVPALESCPQKRGVCTRVYTTTPKKPNSALRKVARVRLTNGYEVSSYIGGEGHNLQEHSVVLIRGGRVKDLPGVRYHTVRGSLDTAGVKDRKQARSKYGSKRPKSA</sequence>
<feature type="chain" id="PRO_0000146276" description="Small ribosomal subunit protein uS12">
    <location>
        <begin position="1"/>
        <end position="125"/>
    </location>
</feature>
<feature type="region of interest" description="Disordered" evidence="3">
    <location>
        <begin position="1"/>
        <end position="24"/>
    </location>
</feature>
<feature type="region of interest" description="Disordered" evidence="3">
    <location>
        <begin position="101"/>
        <end position="125"/>
    </location>
</feature>
<feature type="compositionally biased region" description="Basic residues" evidence="3">
    <location>
        <begin position="9"/>
        <end position="19"/>
    </location>
</feature>
<feature type="compositionally biased region" description="Basic residues" evidence="3">
    <location>
        <begin position="113"/>
        <end position="125"/>
    </location>
</feature>
<feature type="modified residue" description="3-methylthioaspartic acid" evidence="1">
    <location>
        <position position="89"/>
    </location>
</feature>
<evidence type="ECO:0000250" key="1"/>
<evidence type="ECO:0000255" key="2">
    <source>
        <dbReference type="HAMAP-Rule" id="MF_00403"/>
    </source>
</evidence>
<evidence type="ECO:0000256" key="3">
    <source>
        <dbReference type="SAM" id="MobiDB-lite"/>
    </source>
</evidence>
<evidence type="ECO:0000305" key="4"/>
<reference key="1">
    <citation type="journal article" date="2003" name="J. Bacteriol.">
        <title>Complete genome sequence of the ammonia-oxidizing bacterium and obligate chemolithoautotroph Nitrosomonas europaea.</title>
        <authorList>
            <person name="Chain P."/>
            <person name="Lamerdin J.E."/>
            <person name="Larimer F.W."/>
            <person name="Regala W."/>
            <person name="Lao V."/>
            <person name="Land M.L."/>
            <person name="Hauser L."/>
            <person name="Hooper A.B."/>
            <person name="Klotz M.G."/>
            <person name="Norton J."/>
            <person name="Sayavedra-Soto L.A."/>
            <person name="Arciero D.M."/>
            <person name="Hommes N.G."/>
            <person name="Whittaker M.M."/>
            <person name="Arp D.J."/>
        </authorList>
    </citation>
    <scope>NUCLEOTIDE SEQUENCE [LARGE SCALE GENOMIC DNA]</scope>
    <source>
        <strain>ATCC 19718 / CIP 103999 / KCTC 2705 / NBRC 14298</strain>
    </source>
</reference>
<gene>
    <name evidence="2" type="primary">rpsL</name>
    <name type="ordered locus">NE2055</name>
</gene>
<accession>Q82T68</accession>
<dbReference type="EMBL" id="AL954747">
    <property type="protein sequence ID" value="CAD85966.1"/>
    <property type="molecule type" value="Genomic_DNA"/>
</dbReference>
<dbReference type="RefSeq" id="WP_011112567.1">
    <property type="nucleotide sequence ID" value="NC_004757.1"/>
</dbReference>
<dbReference type="SMR" id="Q82T68"/>
<dbReference type="STRING" id="228410.NE2055"/>
<dbReference type="GeneID" id="87105194"/>
<dbReference type="KEGG" id="neu:NE2055"/>
<dbReference type="eggNOG" id="COG0048">
    <property type="taxonomic scope" value="Bacteria"/>
</dbReference>
<dbReference type="HOGENOM" id="CLU_104295_1_2_4"/>
<dbReference type="OrthoDB" id="9802366at2"/>
<dbReference type="PhylomeDB" id="Q82T68"/>
<dbReference type="Proteomes" id="UP000001416">
    <property type="component" value="Chromosome"/>
</dbReference>
<dbReference type="GO" id="GO:0015935">
    <property type="term" value="C:small ribosomal subunit"/>
    <property type="evidence" value="ECO:0007669"/>
    <property type="project" value="InterPro"/>
</dbReference>
<dbReference type="GO" id="GO:0019843">
    <property type="term" value="F:rRNA binding"/>
    <property type="evidence" value="ECO:0007669"/>
    <property type="project" value="UniProtKB-UniRule"/>
</dbReference>
<dbReference type="GO" id="GO:0003735">
    <property type="term" value="F:structural constituent of ribosome"/>
    <property type="evidence" value="ECO:0007669"/>
    <property type="project" value="InterPro"/>
</dbReference>
<dbReference type="GO" id="GO:0000049">
    <property type="term" value="F:tRNA binding"/>
    <property type="evidence" value="ECO:0007669"/>
    <property type="project" value="UniProtKB-UniRule"/>
</dbReference>
<dbReference type="GO" id="GO:0006412">
    <property type="term" value="P:translation"/>
    <property type="evidence" value="ECO:0007669"/>
    <property type="project" value="UniProtKB-UniRule"/>
</dbReference>
<dbReference type="CDD" id="cd03368">
    <property type="entry name" value="Ribosomal_S12"/>
    <property type="match status" value="1"/>
</dbReference>
<dbReference type="FunFam" id="2.40.50.140:FF:000001">
    <property type="entry name" value="30S ribosomal protein S12"/>
    <property type="match status" value="1"/>
</dbReference>
<dbReference type="Gene3D" id="2.40.50.140">
    <property type="entry name" value="Nucleic acid-binding proteins"/>
    <property type="match status" value="1"/>
</dbReference>
<dbReference type="HAMAP" id="MF_00403_B">
    <property type="entry name" value="Ribosomal_uS12_B"/>
    <property type="match status" value="1"/>
</dbReference>
<dbReference type="InterPro" id="IPR012340">
    <property type="entry name" value="NA-bd_OB-fold"/>
</dbReference>
<dbReference type="InterPro" id="IPR006032">
    <property type="entry name" value="Ribosomal_uS12"/>
</dbReference>
<dbReference type="InterPro" id="IPR005679">
    <property type="entry name" value="Ribosomal_uS12_bac"/>
</dbReference>
<dbReference type="NCBIfam" id="TIGR00981">
    <property type="entry name" value="rpsL_bact"/>
    <property type="match status" value="1"/>
</dbReference>
<dbReference type="PANTHER" id="PTHR11652">
    <property type="entry name" value="30S RIBOSOMAL PROTEIN S12 FAMILY MEMBER"/>
    <property type="match status" value="1"/>
</dbReference>
<dbReference type="Pfam" id="PF00164">
    <property type="entry name" value="Ribosom_S12_S23"/>
    <property type="match status" value="1"/>
</dbReference>
<dbReference type="PIRSF" id="PIRSF002133">
    <property type="entry name" value="Ribosomal_S12/S23"/>
    <property type="match status" value="1"/>
</dbReference>
<dbReference type="PRINTS" id="PR01034">
    <property type="entry name" value="RIBOSOMALS12"/>
</dbReference>
<dbReference type="SUPFAM" id="SSF50249">
    <property type="entry name" value="Nucleic acid-binding proteins"/>
    <property type="match status" value="1"/>
</dbReference>
<dbReference type="PROSITE" id="PS00055">
    <property type="entry name" value="RIBOSOMAL_S12"/>
    <property type="match status" value="1"/>
</dbReference>
<name>RS12_NITEU</name>
<keyword id="KW-0488">Methylation</keyword>
<keyword id="KW-1185">Reference proteome</keyword>
<keyword id="KW-0687">Ribonucleoprotein</keyword>
<keyword id="KW-0689">Ribosomal protein</keyword>
<keyword id="KW-0694">RNA-binding</keyword>
<keyword id="KW-0699">rRNA-binding</keyword>
<keyword id="KW-0820">tRNA-binding</keyword>
<protein>
    <recommendedName>
        <fullName evidence="2">Small ribosomal subunit protein uS12</fullName>
    </recommendedName>
    <alternativeName>
        <fullName evidence="4">30S ribosomal protein S12</fullName>
    </alternativeName>
</protein>
<comment type="function">
    <text evidence="2">With S4 and S5 plays an important role in translational accuracy.</text>
</comment>
<comment type="function">
    <text evidence="2">Interacts with and stabilizes bases of the 16S rRNA that are involved in tRNA selection in the A site and with the mRNA backbone. Located at the interface of the 30S and 50S subunits, it traverses the body of the 30S subunit contacting proteins on the other side and probably holding the rRNA structure together. The combined cluster of proteins S8, S12 and S17 appears to hold together the shoulder and platform of the 30S subunit.</text>
</comment>
<comment type="subunit">
    <text evidence="2">Part of the 30S ribosomal subunit. Contacts proteins S8 and S17. May interact with IF1 in the 30S initiation complex.</text>
</comment>
<comment type="similarity">
    <text evidence="2">Belongs to the universal ribosomal protein uS12 family.</text>
</comment>